<dbReference type="EC" id="3.1.26.4" evidence="1"/>
<dbReference type="EMBL" id="BA000021">
    <property type="protein sequence ID" value="BAC24214.1"/>
    <property type="molecule type" value="Genomic_DNA"/>
</dbReference>
<dbReference type="SMR" id="Q8D3D3"/>
<dbReference type="STRING" id="36870.gene:10368546"/>
<dbReference type="KEGG" id="wbr:rnhA"/>
<dbReference type="eggNOG" id="COG0328">
    <property type="taxonomic scope" value="Bacteria"/>
</dbReference>
<dbReference type="HOGENOM" id="CLU_030894_6_0_6"/>
<dbReference type="OrthoDB" id="7845843at2"/>
<dbReference type="Proteomes" id="UP000000562">
    <property type="component" value="Chromosome"/>
</dbReference>
<dbReference type="GO" id="GO:0005737">
    <property type="term" value="C:cytoplasm"/>
    <property type="evidence" value="ECO:0007669"/>
    <property type="project" value="UniProtKB-SubCell"/>
</dbReference>
<dbReference type="GO" id="GO:0000287">
    <property type="term" value="F:magnesium ion binding"/>
    <property type="evidence" value="ECO:0007669"/>
    <property type="project" value="UniProtKB-UniRule"/>
</dbReference>
<dbReference type="GO" id="GO:0003676">
    <property type="term" value="F:nucleic acid binding"/>
    <property type="evidence" value="ECO:0007669"/>
    <property type="project" value="InterPro"/>
</dbReference>
<dbReference type="GO" id="GO:0004523">
    <property type="term" value="F:RNA-DNA hybrid ribonuclease activity"/>
    <property type="evidence" value="ECO:0007669"/>
    <property type="project" value="UniProtKB-UniRule"/>
</dbReference>
<dbReference type="GO" id="GO:0043137">
    <property type="term" value="P:DNA replication, removal of RNA primer"/>
    <property type="evidence" value="ECO:0007669"/>
    <property type="project" value="TreeGrafter"/>
</dbReference>
<dbReference type="CDD" id="cd09278">
    <property type="entry name" value="RNase_HI_prokaryote_like"/>
    <property type="match status" value="1"/>
</dbReference>
<dbReference type="Gene3D" id="3.30.420.10">
    <property type="entry name" value="Ribonuclease H-like superfamily/Ribonuclease H"/>
    <property type="match status" value="1"/>
</dbReference>
<dbReference type="HAMAP" id="MF_00042">
    <property type="entry name" value="RNase_H"/>
    <property type="match status" value="1"/>
</dbReference>
<dbReference type="InterPro" id="IPR050092">
    <property type="entry name" value="RNase_H"/>
</dbReference>
<dbReference type="InterPro" id="IPR012337">
    <property type="entry name" value="RNaseH-like_sf"/>
</dbReference>
<dbReference type="InterPro" id="IPR002156">
    <property type="entry name" value="RNaseH_domain"/>
</dbReference>
<dbReference type="InterPro" id="IPR036397">
    <property type="entry name" value="RNaseH_sf"/>
</dbReference>
<dbReference type="InterPro" id="IPR022892">
    <property type="entry name" value="RNaseHI"/>
</dbReference>
<dbReference type="NCBIfam" id="NF001236">
    <property type="entry name" value="PRK00203.1"/>
    <property type="match status" value="1"/>
</dbReference>
<dbReference type="PANTHER" id="PTHR10642">
    <property type="entry name" value="RIBONUCLEASE H1"/>
    <property type="match status" value="1"/>
</dbReference>
<dbReference type="PANTHER" id="PTHR10642:SF26">
    <property type="entry name" value="RIBONUCLEASE H1"/>
    <property type="match status" value="1"/>
</dbReference>
<dbReference type="Pfam" id="PF00075">
    <property type="entry name" value="RNase_H"/>
    <property type="match status" value="1"/>
</dbReference>
<dbReference type="SUPFAM" id="SSF53098">
    <property type="entry name" value="Ribonuclease H-like"/>
    <property type="match status" value="1"/>
</dbReference>
<dbReference type="PROSITE" id="PS50879">
    <property type="entry name" value="RNASE_H_1"/>
    <property type="match status" value="1"/>
</dbReference>
<protein>
    <recommendedName>
        <fullName evidence="1">Ribonuclease H</fullName>
        <shortName evidence="1">RNase H</shortName>
        <ecNumber evidence="1">3.1.26.4</ecNumber>
    </recommendedName>
</protein>
<sequence>MKKKIKIFIDGACLGNPGPGGYGVIICGKKLYKEISNGYYLTTNNRMEIMAAIIALESLHDMYNIIINTDSKYLKNGITKWIKVWKNNKWKTNNNKSVKNIDLWIKLEYLSKKHFINWNWIKGHTNNIKHDRCDFLAKISAKNPNAIDKIYQKIKNF</sequence>
<comment type="function">
    <text evidence="1">Endonuclease that specifically degrades the RNA of RNA-DNA hybrids.</text>
</comment>
<comment type="catalytic activity">
    <reaction evidence="1">
        <text>Endonucleolytic cleavage to 5'-phosphomonoester.</text>
        <dbReference type="EC" id="3.1.26.4"/>
    </reaction>
</comment>
<comment type="cofactor">
    <cofactor evidence="1">
        <name>Mg(2+)</name>
        <dbReference type="ChEBI" id="CHEBI:18420"/>
    </cofactor>
    <text evidence="1">Binds 1 Mg(2+) ion per subunit. May bind a second metal ion at a regulatory site, or after substrate binding.</text>
</comment>
<comment type="subunit">
    <text evidence="1">Monomer.</text>
</comment>
<comment type="subcellular location">
    <subcellularLocation>
        <location evidence="1">Cytoplasm</location>
    </subcellularLocation>
</comment>
<comment type="similarity">
    <text evidence="1">Belongs to the RNase H family.</text>
</comment>
<reference key="1">
    <citation type="journal article" date="2002" name="Nat. Genet.">
        <title>Genome sequence of the endocellular obligate symbiont of tsetse flies, Wigglesworthia glossinidia.</title>
        <authorList>
            <person name="Akman L."/>
            <person name="Yamashita A."/>
            <person name="Watanabe H."/>
            <person name="Oshima K."/>
            <person name="Shiba T."/>
            <person name="Hattori M."/>
            <person name="Aksoy S."/>
        </authorList>
    </citation>
    <scope>NUCLEOTIDE SEQUENCE [LARGE SCALE GENOMIC DNA]</scope>
</reference>
<name>RNH_WIGBR</name>
<feature type="chain" id="PRO_0000195420" description="Ribonuclease H">
    <location>
        <begin position="1"/>
        <end position="157"/>
    </location>
</feature>
<feature type="domain" description="RNase H type-1" evidence="2">
    <location>
        <begin position="1"/>
        <end position="142"/>
    </location>
</feature>
<feature type="binding site" evidence="1">
    <location>
        <position position="10"/>
    </location>
    <ligand>
        <name>Mg(2+)</name>
        <dbReference type="ChEBI" id="CHEBI:18420"/>
        <label>1</label>
    </ligand>
</feature>
<feature type="binding site" evidence="1">
    <location>
        <position position="10"/>
    </location>
    <ligand>
        <name>Mg(2+)</name>
        <dbReference type="ChEBI" id="CHEBI:18420"/>
        <label>2</label>
    </ligand>
</feature>
<feature type="binding site" evidence="1">
    <location>
        <position position="48"/>
    </location>
    <ligand>
        <name>Mg(2+)</name>
        <dbReference type="ChEBI" id="CHEBI:18420"/>
        <label>1</label>
    </ligand>
</feature>
<feature type="binding site" evidence="1">
    <location>
        <position position="70"/>
    </location>
    <ligand>
        <name>Mg(2+)</name>
        <dbReference type="ChEBI" id="CHEBI:18420"/>
        <label>1</label>
    </ligand>
</feature>
<feature type="binding site" evidence="1">
    <location>
        <position position="134"/>
    </location>
    <ligand>
        <name>Mg(2+)</name>
        <dbReference type="ChEBI" id="CHEBI:18420"/>
        <label>2</label>
    </ligand>
</feature>
<evidence type="ECO:0000255" key="1">
    <source>
        <dbReference type="HAMAP-Rule" id="MF_00042"/>
    </source>
</evidence>
<evidence type="ECO:0000255" key="2">
    <source>
        <dbReference type="PROSITE-ProRule" id="PRU00408"/>
    </source>
</evidence>
<organism>
    <name type="scientific">Wigglesworthia glossinidia brevipalpis</name>
    <dbReference type="NCBI Taxonomy" id="36870"/>
    <lineage>
        <taxon>Bacteria</taxon>
        <taxon>Pseudomonadati</taxon>
        <taxon>Pseudomonadota</taxon>
        <taxon>Gammaproteobacteria</taxon>
        <taxon>Enterobacterales</taxon>
        <taxon>Erwiniaceae</taxon>
        <taxon>Wigglesworthia</taxon>
    </lineage>
</organism>
<gene>
    <name evidence="1" type="primary">rnhA</name>
    <name type="ordered locus">WIGBR0680</name>
</gene>
<keyword id="KW-0963">Cytoplasm</keyword>
<keyword id="KW-0255">Endonuclease</keyword>
<keyword id="KW-0378">Hydrolase</keyword>
<keyword id="KW-0460">Magnesium</keyword>
<keyword id="KW-0479">Metal-binding</keyword>
<keyword id="KW-0540">Nuclease</keyword>
<keyword id="KW-1185">Reference proteome</keyword>
<proteinExistence type="inferred from homology"/>
<accession>Q8D3D3</accession>